<comment type="catalytic activity">
    <reaction evidence="1">
        <text>(6S)-5,6,7,8-tetrahydrofolate + formate + ATP = (6R)-10-formyltetrahydrofolate + ADP + phosphate</text>
        <dbReference type="Rhea" id="RHEA:20221"/>
        <dbReference type="ChEBI" id="CHEBI:15740"/>
        <dbReference type="ChEBI" id="CHEBI:30616"/>
        <dbReference type="ChEBI" id="CHEBI:43474"/>
        <dbReference type="ChEBI" id="CHEBI:57453"/>
        <dbReference type="ChEBI" id="CHEBI:195366"/>
        <dbReference type="ChEBI" id="CHEBI:456216"/>
        <dbReference type="EC" id="6.3.4.3"/>
    </reaction>
</comment>
<comment type="pathway">
    <text evidence="1">One-carbon metabolism; tetrahydrofolate interconversion.</text>
</comment>
<comment type="similarity">
    <text evidence="1">Belongs to the formate--tetrahydrofolate ligase family.</text>
</comment>
<reference key="1">
    <citation type="journal article" date="2003" name="Genome Res.">
        <title>Genome sequence of an M3 strain of Streptococcus pyogenes reveals a large-scale genomic rearrangement in invasive strains and new insights into phage evolution.</title>
        <authorList>
            <person name="Nakagawa I."/>
            <person name="Kurokawa K."/>
            <person name="Yamashita A."/>
            <person name="Nakata M."/>
            <person name="Tomiyasu Y."/>
            <person name="Okahashi N."/>
            <person name="Kawabata S."/>
            <person name="Yamazaki K."/>
            <person name="Shiba T."/>
            <person name="Yasunaga T."/>
            <person name="Hayashi H."/>
            <person name="Hattori M."/>
            <person name="Hamada S."/>
        </authorList>
    </citation>
    <scope>NUCLEOTIDE SEQUENCE [LARGE SCALE GENOMIC DNA]</scope>
    <source>
        <strain>SSI-1</strain>
    </source>
</reference>
<protein>
    <recommendedName>
        <fullName evidence="1">Formate--tetrahydrofolate ligase 1</fullName>
        <ecNumber evidence="1">6.3.4.3</ecNumber>
    </recommendedName>
    <alternativeName>
        <fullName evidence="1">Formyltetrahydrofolate synthetase 1</fullName>
        <shortName evidence="1">FHS 1</shortName>
        <shortName evidence="1">FTHFS 1</shortName>
    </alternativeName>
</protein>
<sequence>MKSDIEIAQSVALQPITDIVKKVGIDGDDIELYGKYKAKLSFEKMKAVEANEPGKLILVTAINPTPAGEGKSTMSIGLADALNQMGKKTMLALREPSLGPVMGIKGGAAGGGYAQVLPMEDINLHFTGDMHAITTANNALSALIDNHLQQGNDLGIDPRRIIWKRVLDLNDRALRQVIVGLGSPVNGVPREDGFDITVASEIMAILCLATDLKDLKKRLADIVVAYTYDRKPVYVRDLKVEGALTLILKDAIKPNLVQTIYGTPALIHGGPFANIAHGCNSVLATSTALRLADYTVTEAGFGADLGAEKFLNIKVPNLPKAPDAIVIVATLRALKMHGGVAKSDLAAENCEAVRLGFANLKRHVENMRQFKVPVVVAINEFVADTEAEIATLKALCEEIKVPVELASVWANGAEGGLALAKTVVRVIDQEAADYKRLYSDEDTLEEKVINIVTQIYGGKAVQFGPKAKTQLKQFAEFGWDKLPVCMAKTQYSFSDNPSLLGAPTDFDITIREFVPKTGAGFIVGLTGDVMTMPGLPKVPAAMAMDVAENGTALGLF</sequence>
<organism>
    <name type="scientific">Streptococcus pyogenes serotype M3 (strain SSI-1)</name>
    <dbReference type="NCBI Taxonomy" id="193567"/>
    <lineage>
        <taxon>Bacteria</taxon>
        <taxon>Bacillati</taxon>
        <taxon>Bacillota</taxon>
        <taxon>Bacilli</taxon>
        <taxon>Lactobacillales</taxon>
        <taxon>Streptococcaceae</taxon>
        <taxon>Streptococcus</taxon>
    </lineage>
</organism>
<gene>
    <name evidence="1" type="primary">fhs1</name>
    <name type="synonym">fhs</name>
    <name type="ordered locus">SPs1053</name>
</gene>
<feature type="chain" id="PRO_0000411585" description="Formate--tetrahydrofolate ligase 1">
    <location>
        <begin position="1"/>
        <end position="556"/>
    </location>
</feature>
<feature type="binding site" evidence="1">
    <location>
        <begin position="65"/>
        <end position="72"/>
    </location>
    <ligand>
        <name>ATP</name>
        <dbReference type="ChEBI" id="CHEBI:30616"/>
    </ligand>
</feature>
<keyword id="KW-0067">ATP-binding</keyword>
<keyword id="KW-0436">Ligase</keyword>
<keyword id="KW-0547">Nucleotide-binding</keyword>
<keyword id="KW-0554">One-carbon metabolism</keyword>
<proteinExistence type="inferred from homology"/>
<dbReference type="EC" id="6.3.4.3" evidence="1"/>
<dbReference type="EMBL" id="BA000034">
    <property type="protein sequence ID" value="BAC64148.1"/>
    <property type="molecule type" value="Genomic_DNA"/>
</dbReference>
<dbReference type="RefSeq" id="WP_002989724.1">
    <property type="nucleotide sequence ID" value="NC_004606.1"/>
</dbReference>
<dbReference type="SMR" id="P0DF91"/>
<dbReference type="KEGG" id="sps:SPs1053"/>
<dbReference type="HOGENOM" id="CLU_003601_3_3_9"/>
<dbReference type="UniPathway" id="UPA00193"/>
<dbReference type="GO" id="GO:0005524">
    <property type="term" value="F:ATP binding"/>
    <property type="evidence" value="ECO:0007669"/>
    <property type="project" value="UniProtKB-UniRule"/>
</dbReference>
<dbReference type="GO" id="GO:0004329">
    <property type="term" value="F:formate-tetrahydrofolate ligase activity"/>
    <property type="evidence" value="ECO:0007669"/>
    <property type="project" value="UniProtKB-UniRule"/>
</dbReference>
<dbReference type="GO" id="GO:0035999">
    <property type="term" value="P:tetrahydrofolate interconversion"/>
    <property type="evidence" value="ECO:0007669"/>
    <property type="project" value="UniProtKB-UniRule"/>
</dbReference>
<dbReference type="CDD" id="cd00477">
    <property type="entry name" value="FTHFS"/>
    <property type="match status" value="1"/>
</dbReference>
<dbReference type="FunFam" id="3.30.1510.10:FF:000001">
    <property type="entry name" value="Formate--tetrahydrofolate ligase"/>
    <property type="match status" value="1"/>
</dbReference>
<dbReference type="FunFam" id="3.10.410.10:FF:000001">
    <property type="entry name" value="Putative formate--tetrahydrofolate ligase"/>
    <property type="match status" value="1"/>
</dbReference>
<dbReference type="Gene3D" id="3.30.1510.10">
    <property type="entry name" value="Domain 2, N(10)-formyltetrahydrofolate synthetase"/>
    <property type="match status" value="1"/>
</dbReference>
<dbReference type="Gene3D" id="3.10.410.10">
    <property type="entry name" value="Formyltetrahydrofolate synthetase, domain 3"/>
    <property type="match status" value="1"/>
</dbReference>
<dbReference type="Gene3D" id="3.40.50.300">
    <property type="entry name" value="P-loop containing nucleotide triphosphate hydrolases"/>
    <property type="match status" value="1"/>
</dbReference>
<dbReference type="HAMAP" id="MF_01543">
    <property type="entry name" value="FTHFS"/>
    <property type="match status" value="1"/>
</dbReference>
<dbReference type="InterPro" id="IPR000559">
    <property type="entry name" value="Formate_THF_ligase"/>
</dbReference>
<dbReference type="InterPro" id="IPR020628">
    <property type="entry name" value="Formate_THF_ligase_CS"/>
</dbReference>
<dbReference type="InterPro" id="IPR027417">
    <property type="entry name" value="P-loop_NTPase"/>
</dbReference>
<dbReference type="NCBIfam" id="NF010030">
    <property type="entry name" value="PRK13505.1"/>
    <property type="match status" value="1"/>
</dbReference>
<dbReference type="Pfam" id="PF01268">
    <property type="entry name" value="FTHFS"/>
    <property type="match status" value="1"/>
</dbReference>
<dbReference type="SUPFAM" id="SSF52540">
    <property type="entry name" value="P-loop containing nucleoside triphosphate hydrolases"/>
    <property type="match status" value="1"/>
</dbReference>
<dbReference type="PROSITE" id="PS00721">
    <property type="entry name" value="FTHFS_1"/>
    <property type="match status" value="1"/>
</dbReference>
<dbReference type="PROSITE" id="PS00722">
    <property type="entry name" value="FTHFS_2"/>
    <property type="match status" value="1"/>
</dbReference>
<name>FTHS1_STRPQ</name>
<accession>P0DF91</accession>
<accession>Q79X48</accession>
<accession>Q7CF36</accession>
<evidence type="ECO:0000255" key="1">
    <source>
        <dbReference type="HAMAP-Rule" id="MF_01543"/>
    </source>
</evidence>